<protein>
    <recommendedName>
        <fullName>Proline-rich AKT1 substrate 1</fullName>
        <shortName>Proline-rich AKT substrate</shortName>
    </recommendedName>
</protein>
<dbReference type="EMBL" id="AK003638">
    <property type="protein sequence ID" value="BAB22905.1"/>
    <property type="molecule type" value="mRNA"/>
</dbReference>
<dbReference type="EMBL" id="AK141771">
    <property type="protein sequence ID" value="BAE24829.1"/>
    <property type="molecule type" value="mRNA"/>
</dbReference>
<dbReference type="EMBL" id="AK154110">
    <property type="protein sequence ID" value="BAE32383.1"/>
    <property type="molecule type" value="mRNA"/>
</dbReference>
<dbReference type="EMBL" id="BC132372">
    <property type="protein sequence ID" value="AAI32373.1"/>
    <property type="molecule type" value="mRNA"/>
</dbReference>
<dbReference type="EMBL" id="BC132374">
    <property type="protein sequence ID" value="AAI32375.1"/>
    <property type="molecule type" value="mRNA"/>
</dbReference>
<dbReference type="CCDS" id="CCDS21218.1"/>
<dbReference type="RefSeq" id="NP_001240849.1">
    <property type="nucleotide sequence ID" value="NM_001253920.2"/>
</dbReference>
<dbReference type="RefSeq" id="NP_001277623.1">
    <property type="nucleotide sequence ID" value="NM_001290694.1"/>
</dbReference>
<dbReference type="RefSeq" id="NP_001277624.1">
    <property type="nucleotide sequence ID" value="NM_001290695.1"/>
</dbReference>
<dbReference type="RefSeq" id="NP_001369409.1">
    <property type="nucleotide sequence ID" value="NM_001382480.1"/>
</dbReference>
<dbReference type="RefSeq" id="NP_001369410.1">
    <property type="nucleotide sequence ID" value="NM_001382481.1"/>
</dbReference>
<dbReference type="RefSeq" id="NP_001369411.1">
    <property type="nucleotide sequence ID" value="NM_001382482.1"/>
</dbReference>
<dbReference type="RefSeq" id="NP_001369412.1">
    <property type="nucleotide sequence ID" value="NM_001382483.1"/>
</dbReference>
<dbReference type="RefSeq" id="NP_001369413.1">
    <property type="nucleotide sequence ID" value="NM_001382484.1"/>
</dbReference>
<dbReference type="RefSeq" id="NP_080546.1">
    <property type="nucleotide sequence ID" value="NM_026270.5"/>
</dbReference>
<dbReference type="RefSeq" id="XP_006541182.1">
    <property type="nucleotide sequence ID" value="XM_006541119.3"/>
</dbReference>
<dbReference type="RefSeq" id="XP_006541183.1">
    <property type="nucleotide sequence ID" value="XM_006541120.3"/>
</dbReference>
<dbReference type="RefSeq" id="XP_006541184.1">
    <property type="nucleotide sequence ID" value="XM_006541121.3"/>
</dbReference>
<dbReference type="RefSeq" id="XP_006541185.1">
    <property type="nucleotide sequence ID" value="XM_006541122.2"/>
</dbReference>
<dbReference type="RefSeq" id="XP_030098797.1">
    <property type="nucleotide sequence ID" value="XM_030242937.2"/>
</dbReference>
<dbReference type="RefSeq" id="XP_036009275.1">
    <property type="nucleotide sequence ID" value="XM_036153382.1"/>
</dbReference>
<dbReference type="BioGRID" id="212306">
    <property type="interactions" value="8"/>
</dbReference>
<dbReference type="FunCoup" id="Q9D1F4">
    <property type="interactions" value="724"/>
</dbReference>
<dbReference type="IntAct" id="Q9D1F4">
    <property type="interactions" value="1"/>
</dbReference>
<dbReference type="MINT" id="Q9D1F4"/>
<dbReference type="STRING" id="10090.ENSMUSP00000103514"/>
<dbReference type="ChEMBL" id="CHEMBL5465541"/>
<dbReference type="GlyGen" id="Q9D1F4">
    <property type="glycosylation" value="2 sites, 1 O-linked glycan (1 site)"/>
</dbReference>
<dbReference type="iPTMnet" id="Q9D1F4"/>
<dbReference type="PhosphoSitePlus" id="Q9D1F4"/>
<dbReference type="jPOST" id="Q9D1F4"/>
<dbReference type="PaxDb" id="10090-ENSMUSP00000103512"/>
<dbReference type="ProteomicsDB" id="296391"/>
<dbReference type="Pumba" id="Q9D1F4"/>
<dbReference type="Antibodypedia" id="32195">
    <property type="antibodies" value="588 antibodies from 40 providers"/>
</dbReference>
<dbReference type="DNASU" id="67605"/>
<dbReference type="Ensembl" id="ENSMUST00000054343.15">
    <property type="protein sequence ID" value="ENSMUSP00000049764.9"/>
    <property type="gene ID" value="ENSMUSG00000011096.18"/>
</dbReference>
<dbReference type="Ensembl" id="ENSMUST00000107880.9">
    <property type="protein sequence ID" value="ENSMUSP00000103512.2"/>
    <property type="gene ID" value="ENSMUSG00000011096.18"/>
</dbReference>
<dbReference type="GeneID" id="67605"/>
<dbReference type="KEGG" id="mmu:67605"/>
<dbReference type="UCSC" id="uc009grd.2">
    <property type="organism name" value="mouse"/>
</dbReference>
<dbReference type="AGR" id="MGI:1914855"/>
<dbReference type="CTD" id="84335"/>
<dbReference type="MGI" id="MGI:1914855">
    <property type="gene designation" value="Akt1s1"/>
</dbReference>
<dbReference type="VEuPathDB" id="HostDB:ENSMUSG00000011096"/>
<dbReference type="eggNOG" id="ENOG502RY6G">
    <property type="taxonomic scope" value="Eukaryota"/>
</dbReference>
<dbReference type="GeneTree" id="ENSGT00390000017397"/>
<dbReference type="HOGENOM" id="CLU_067112_0_0_1"/>
<dbReference type="InParanoid" id="Q9D1F4"/>
<dbReference type="OMA" id="DFSYNVW"/>
<dbReference type="OrthoDB" id="87311at9989"/>
<dbReference type="PhylomeDB" id="Q9D1F4"/>
<dbReference type="Reactome" id="R-MMU-165159">
    <property type="pathway name" value="MTOR signalling"/>
</dbReference>
<dbReference type="Reactome" id="R-MMU-166208">
    <property type="pathway name" value="mTORC1-mediated signalling"/>
</dbReference>
<dbReference type="Reactome" id="R-MMU-198323">
    <property type="pathway name" value="AKT phosphorylates targets in the cytosol"/>
</dbReference>
<dbReference type="Reactome" id="R-MMU-3371571">
    <property type="pathway name" value="HSF1-dependent transactivation"/>
</dbReference>
<dbReference type="BioGRID-ORCS" id="67605">
    <property type="hits" value="3 hits in 76 CRISPR screens"/>
</dbReference>
<dbReference type="ChiTaRS" id="Akt1s1">
    <property type="organism name" value="mouse"/>
</dbReference>
<dbReference type="PRO" id="PR:Q9D1F4"/>
<dbReference type="Proteomes" id="UP000000589">
    <property type="component" value="Chromosome 7"/>
</dbReference>
<dbReference type="RNAct" id="Q9D1F4">
    <property type="molecule type" value="protein"/>
</dbReference>
<dbReference type="Bgee" id="ENSMUSG00000011096">
    <property type="expression patterns" value="Expressed in hindlimb stylopod muscle and 235 other cell types or tissues"/>
</dbReference>
<dbReference type="ExpressionAtlas" id="Q9D1F4">
    <property type="expression patterns" value="baseline and differential"/>
</dbReference>
<dbReference type="GO" id="GO:0005829">
    <property type="term" value="C:cytosol"/>
    <property type="evidence" value="ECO:0000314"/>
    <property type="project" value="UniProtKB"/>
</dbReference>
<dbReference type="GO" id="GO:0031931">
    <property type="term" value="C:TORC1 complex"/>
    <property type="evidence" value="ECO:0007669"/>
    <property type="project" value="Ensembl"/>
</dbReference>
<dbReference type="GO" id="GO:0030291">
    <property type="term" value="F:protein serine/threonine kinase inhibitor activity"/>
    <property type="evidence" value="ECO:0000250"/>
    <property type="project" value="UniProtKB"/>
</dbReference>
<dbReference type="GO" id="GO:0045792">
    <property type="term" value="P:negative regulation of cell size"/>
    <property type="evidence" value="ECO:0007669"/>
    <property type="project" value="Ensembl"/>
</dbReference>
<dbReference type="GO" id="GO:1904262">
    <property type="term" value="P:negative regulation of TORC1 signaling"/>
    <property type="evidence" value="ECO:0000250"/>
    <property type="project" value="UniProtKB"/>
</dbReference>
<dbReference type="GO" id="GO:0048011">
    <property type="term" value="P:neurotrophin TRK receptor signaling pathway"/>
    <property type="evidence" value="ECO:0007669"/>
    <property type="project" value="InterPro"/>
</dbReference>
<dbReference type="GO" id="GO:0007219">
    <property type="term" value="P:Notch signaling pathway"/>
    <property type="evidence" value="ECO:0000247"/>
    <property type="project" value="MGI"/>
</dbReference>
<dbReference type="GO" id="GO:0042981">
    <property type="term" value="P:regulation of apoptotic process"/>
    <property type="evidence" value="ECO:0000314"/>
    <property type="project" value="UniProtKB"/>
</dbReference>
<dbReference type="GO" id="GO:0043523">
    <property type="term" value="P:regulation of neuron apoptotic process"/>
    <property type="evidence" value="ECO:0000314"/>
    <property type="project" value="UniProtKB"/>
</dbReference>
<dbReference type="InterPro" id="IPR026682">
    <property type="entry name" value="AKT1S1"/>
</dbReference>
<dbReference type="InterPro" id="IPR055192">
    <property type="entry name" value="PRAS_NT"/>
</dbReference>
<dbReference type="PANTHER" id="PTHR21844">
    <property type="entry name" value="AKT1 SUBSTRATE 1 PROTEIN"/>
    <property type="match status" value="1"/>
</dbReference>
<dbReference type="PANTHER" id="PTHR21844:SF2">
    <property type="entry name" value="PROLINE-RICH AKT1 SUBSTRATE 1"/>
    <property type="match status" value="1"/>
</dbReference>
<dbReference type="Pfam" id="PF15798">
    <property type="entry name" value="PRAS"/>
    <property type="match status" value="1"/>
</dbReference>
<dbReference type="Pfam" id="PF22911">
    <property type="entry name" value="PRAS_NT"/>
    <property type="match status" value="1"/>
</dbReference>
<comment type="function">
    <text evidence="1 3 4">Negative regulator of the mechanistic target of rapamycin complex 1 (mTORC1), an evolutionarily conserved central nutrient sensor that stimulates anabolic reactions and macromolecule biosynthesis to promote cellular biomass generation and growth (By similarity). In absence of insulin and nutrients, AKT1S1 associates with the mTORC1 complex and directly inhibits mTORC1 activity by blocking the MTOR substrate-recruitment site (By similarity). In response to insulin and nutrients, AKT1S1 dissociates from mTORC1 (By similarity). Its activity is dependent on its phosphorylation state and binding to 14-3-3 (By similarity). May also play a role in nerve growth factor-mediated neuroprotection (PubMed:14973226, PubMed:16397181).</text>
</comment>
<comment type="subunit">
    <text evidence="1">Associated component of the mechanistic target of rapamycin complex 1 (mTORC1), which contains core MTOR, MLST8 and RPTOR (By similarity). Dissociates from mTORC1 in response to insulin treatment (By similarity). mTORC1 binds to and is inhibited by FKBP12-rapamycin (By similarity). Interacts (via TOS motif) with RPTOR; interaction is direct (By similarity). The phosphorylated form interacts with 14-3-3 proteins (By similarity).</text>
</comment>
<comment type="subcellular location">
    <subcellularLocation>
        <location evidence="3">Cytoplasm</location>
        <location evidence="3">Cytosol</location>
    </subcellularLocation>
    <text evidence="3">Found in the cytosolic fraction of the brain (PubMed:14973226). Colocalizes with cortical neurons following ischemic/reperfusion injury (PubMed:14973226).</text>
</comment>
<comment type="domain">
    <text evidence="1">The TOS motif mediates interaction with RPTOR, leading to promote phosphorylation by mTORC1 complex.</text>
</comment>
<comment type="PTM">
    <text evidence="1">Phosphorylated by AKT1; phosphorylation takes place in response to insulin treatment and promotes AKT1S1 interaction with 14-3-3 proteins, leading to relieve its inhibitor activity (By similarity). Phosphorylated by MTOR following mTORC1 activation, inhibiting AKT1S1 inhibitor activity: phosphorylation by MTOR probably serves as a feedback loop that relieves inhibition from AKT1S1 in response to mTORC1 inactivation (By similarity). Phosphorylation at Thr-247 by DYRK3 relieves inhibitory function on mTORC1 (By similarity).</text>
</comment>
<keyword id="KW-0963">Cytoplasm</keyword>
<keyword id="KW-0488">Methylation</keyword>
<keyword id="KW-0597">Phosphoprotein</keyword>
<keyword id="KW-1185">Reference proteome</keyword>
<name>AKTS1_MOUSE</name>
<evidence type="ECO:0000250" key="1">
    <source>
        <dbReference type="UniProtKB" id="Q96B36"/>
    </source>
</evidence>
<evidence type="ECO:0000256" key="2">
    <source>
        <dbReference type="SAM" id="MobiDB-lite"/>
    </source>
</evidence>
<evidence type="ECO:0000269" key="3">
    <source>
    </source>
</evidence>
<evidence type="ECO:0000269" key="4">
    <source>
    </source>
</evidence>
<evidence type="ECO:0000303" key="5">
    <source>
    </source>
</evidence>
<evidence type="ECO:0000305" key="6"/>
<evidence type="ECO:0000312" key="7">
    <source>
        <dbReference type="EMBL" id="BAB22905.1"/>
    </source>
</evidence>
<evidence type="ECO:0000312" key="8">
    <source>
        <dbReference type="EMBL" id="BAE32383.1"/>
    </source>
</evidence>
<evidence type="ECO:0000312" key="9">
    <source>
        <dbReference type="MGI" id="MGI:1914855"/>
    </source>
</evidence>
<evidence type="ECO:0007744" key="10">
    <source>
    </source>
</evidence>
<evidence type="ECO:0007744" key="11">
    <source>
    </source>
</evidence>
<evidence type="ECO:0007744" key="12">
    <source>
    </source>
</evidence>
<proteinExistence type="evidence at protein level"/>
<accession>Q9D1F4</accession>
<accession>A2RT52</accession>
<gene>
    <name evidence="9" type="primary">Akt1s1</name>
    <name evidence="5" type="synonym">Pras</name>
</gene>
<sequence length="257" mass="27483">MASGRPEELWEAVVGAAERFQARTGTELVLLTAAPPPPPRPGPCAYAAHGRGALAEAARRCLHDIAQAHRAATATRPPGPPPAPQPPSPAPSPPPRPALAREDEEEDEDEPTETETSGERLGGSDNGGLFMMDEDATLQDLPPFCESDPESTDDGSLSEETPAGPTACPQPPATALPTQQYAKSLPVSVPVWAFKEKRTEARSSDEENGPPSSPDLDRIAASMRALVLREAEDTQVFGDLPRPRLNTSDFQKLKRKY</sequence>
<feature type="chain" id="PRO_0000253447" description="Proline-rich AKT1 substrate 1">
    <location>
        <begin position="1"/>
        <end position="257"/>
    </location>
</feature>
<feature type="region of interest" description="Disordered" evidence="2">
    <location>
        <begin position="64"/>
        <end position="181"/>
    </location>
</feature>
<feature type="region of interest" description="Disordered" evidence="2">
    <location>
        <begin position="197"/>
        <end position="217"/>
    </location>
</feature>
<feature type="short sequence motif" description="TOS motif" evidence="1">
    <location>
        <begin position="130"/>
        <end position="134"/>
    </location>
</feature>
<feature type="compositionally biased region" description="Pro residues" evidence="2">
    <location>
        <begin position="77"/>
        <end position="97"/>
    </location>
</feature>
<feature type="compositionally biased region" description="Acidic residues" evidence="2">
    <location>
        <begin position="102"/>
        <end position="113"/>
    </location>
</feature>
<feature type="compositionally biased region" description="Acidic residues" evidence="2">
    <location>
        <begin position="147"/>
        <end position="157"/>
    </location>
</feature>
<feature type="modified residue" description="Omega-N-methylarginine" evidence="12">
    <location>
        <position position="51"/>
    </location>
</feature>
<feature type="modified residue" description="Phosphoserine" evidence="11">
    <location>
        <position position="88"/>
    </location>
</feature>
<feature type="modified residue" description="Phosphoserine" evidence="11">
    <location>
        <position position="92"/>
    </location>
</feature>
<feature type="modified residue" description="Phosphoserine" evidence="11">
    <location>
        <position position="117"/>
    </location>
</feature>
<feature type="modified residue" description="Phosphoserine" evidence="11">
    <location>
        <position position="184"/>
    </location>
</feature>
<feature type="modified residue" description="Phosphoserine" evidence="10 11">
    <location>
        <position position="203"/>
    </location>
</feature>
<feature type="modified residue" description="Phosphoserine" evidence="10 11">
    <location>
        <position position="204"/>
    </location>
</feature>
<feature type="modified residue" description="Phosphoserine" evidence="10 11">
    <location>
        <position position="212"/>
    </location>
</feature>
<feature type="modified residue" description="Phosphoserine" evidence="10 11">
    <location>
        <position position="213"/>
    </location>
</feature>
<feature type="modified residue" description="Phosphoserine" evidence="1">
    <location>
        <position position="222"/>
    </location>
</feature>
<feature type="modified residue" description="Phosphothreonine" evidence="11">
    <location>
        <position position="247"/>
    </location>
</feature>
<organism>
    <name type="scientific">Mus musculus</name>
    <name type="common">Mouse</name>
    <dbReference type="NCBI Taxonomy" id="10090"/>
    <lineage>
        <taxon>Eukaryota</taxon>
        <taxon>Metazoa</taxon>
        <taxon>Chordata</taxon>
        <taxon>Craniata</taxon>
        <taxon>Vertebrata</taxon>
        <taxon>Euteleostomi</taxon>
        <taxon>Mammalia</taxon>
        <taxon>Eutheria</taxon>
        <taxon>Euarchontoglires</taxon>
        <taxon>Glires</taxon>
        <taxon>Rodentia</taxon>
        <taxon>Myomorpha</taxon>
        <taxon>Muroidea</taxon>
        <taxon>Muridae</taxon>
        <taxon>Murinae</taxon>
        <taxon>Mus</taxon>
        <taxon>Mus</taxon>
    </lineage>
</organism>
<reference evidence="7" key="1">
    <citation type="journal article" date="2005" name="Science">
        <title>The transcriptional landscape of the mammalian genome.</title>
        <authorList>
            <person name="Carninci P."/>
            <person name="Kasukawa T."/>
            <person name="Katayama S."/>
            <person name="Gough J."/>
            <person name="Frith M.C."/>
            <person name="Maeda N."/>
            <person name="Oyama R."/>
            <person name="Ravasi T."/>
            <person name="Lenhard B."/>
            <person name="Wells C."/>
            <person name="Kodzius R."/>
            <person name="Shimokawa K."/>
            <person name="Bajic V.B."/>
            <person name="Brenner S.E."/>
            <person name="Batalov S."/>
            <person name="Forrest A.R."/>
            <person name="Zavolan M."/>
            <person name="Davis M.J."/>
            <person name="Wilming L.G."/>
            <person name="Aidinis V."/>
            <person name="Allen J.E."/>
            <person name="Ambesi-Impiombato A."/>
            <person name="Apweiler R."/>
            <person name="Aturaliya R.N."/>
            <person name="Bailey T.L."/>
            <person name="Bansal M."/>
            <person name="Baxter L."/>
            <person name="Beisel K.W."/>
            <person name="Bersano T."/>
            <person name="Bono H."/>
            <person name="Chalk A.M."/>
            <person name="Chiu K.P."/>
            <person name="Choudhary V."/>
            <person name="Christoffels A."/>
            <person name="Clutterbuck D.R."/>
            <person name="Crowe M.L."/>
            <person name="Dalla E."/>
            <person name="Dalrymple B.P."/>
            <person name="de Bono B."/>
            <person name="Della Gatta G."/>
            <person name="di Bernardo D."/>
            <person name="Down T."/>
            <person name="Engstrom P."/>
            <person name="Fagiolini M."/>
            <person name="Faulkner G."/>
            <person name="Fletcher C.F."/>
            <person name="Fukushima T."/>
            <person name="Furuno M."/>
            <person name="Futaki S."/>
            <person name="Gariboldi M."/>
            <person name="Georgii-Hemming P."/>
            <person name="Gingeras T.R."/>
            <person name="Gojobori T."/>
            <person name="Green R.E."/>
            <person name="Gustincich S."/>
            <person name="Harbers M."/>
            <person name="Hayashi Y."/>
            <person name="Hensch T.K."/>
            <person name="Hirokawa N."/>
            <person name="Hill D."/>
            <person name="Huminiecki L."/>
            <person name="Iacono M."/>
            <person name="Ikeo K."/>
            <person name="Iwama A."/>
            <person name="Ishikawa T."/>
            <person name="Jakt M."/>
            <person name="Kanapin A."/>
            <person name="Katoh M."/>
            <person name="Kawasawa Y."/>
            <person name="Kelso J."/>
            <person name="Kitamura H."/>
            <person name="Kitano H."/>
            <person name="Kollias G."/>
            <person name="Krishnan S.P."/>
            <person name="Kruger A."/>
            <person name="Kummerfeld S.K."/>
            <person name="Kurochkin I.V."/>
            <person name="Lareau L.F."/>
            <person name="Lazarevic D."/>
            <person name="Lipovich L."/>
            <person name="Liu J."/>
            <person name="Liuni S."/>
            <person name="McWilliam S."/>
            <person name="Madan Babu M."/>
            <person name="Madera M."/>
            <person name="Marchionni L."/>
            <person name="Matsuda H."/>
            <person name="Matsuzawa S."/>
            <person name="Miki H."/>
            <person name="Mignone F."/>
            <person name="Miyake S."/>
            <person name="Morris K."/>
            <person name="Mottagui-Tabar S."/>
            <person name="Mulder N."/>
            <person name="Nakano N."/>
            <person name="Nakauchi H."/>
            <person name="Ng P."/>
            <person name="Nilsson R."/>
            <person name="Nishiguchi S."/>
            <person name="Nishikawa S."/>
            <person name="Nori F."/>
            <person name="Ohara O."/>
            <person name="Okazaki Y."/>
            <person name="Orlando V."/>
            <person name="Pang K.C."/>
            <person name="Pavan W.J."/>
            <person name="Pavesi G."/>
            <person name="Pesole G."/>
            <person name="Petrovsky N."/>
            <person name="Piazza S."/>
            <person name="Reed J."/>
            <person name="Reid J.F."/>
            <person name="Ring B.Z."/>
            <person name="Ringwald M."/>
            <person name="Rost B."/>
            <person name="Ruan Y."/>
            <person name="Salzberg S.L."/>
            <person name="Sandelin A."/>
            <person name="Schneider C."/>
            <person name="Schoenbach C."/>
            <person name="Sekiguchi K."/>
            <person name="Semple C.A."/>
            <person name="Seno S."/>
            <person name="Sessa L."/>
            <person name="Sheng Y."/>
            <person name="Shibata Y."/>
            <person name="Shimada H."/>
            <person name="Shimada K."/>
            <person name="Silva D."/>
            <person name="Sinclair B."/>
            <person name="Sperling S."/>
            <person name="Stupka E."/>
            <person name="Sugiura K."/>
            <person name="Sultana R."/>
            <person name="Takenaka Y."/>
            <person name="Taki K."/>
            <person name="Tammoja K."/>
            <person name="Tan S.L."/>
            <person name="Tang S."/>
            <person name="Taylor M.S."/>
            <person name="Tegner J."/>
            <person name="Teichmann S.A."/>
            <person name="Ueda H.R."/>
            <person name="van Nimwegen E."/>
            <person name="Verardo R."/>
            <person name="Wei C.L."/>
            <person name="Yagi K."/>
            <person name="Yamanishi H."/>
            <person name="Zabarovsky E."/>
            <person name="Zhu S."/>
            <person name="Zimmer A."/>
            <person name="Hide W."/>
            <person name="Bult C."/>
            <person name="Grimmond S.M."/>
            <person name="Teasdale R.D."/>
            <person name="Liu E.T."/>
            <person name="Brusic V."/>
            <person name="Quackenbush J."/>
            <person name="Wahlestedt C."/>
            <person name="Mattick J.S."/>
            <person name="Hume D.A."/>
            <person name="Kai C."/>
            <person name="Sasaki D."/>
            <person name="Tomaru Y."/>
            <person name="Fukuda S."/>
            <person name="Kanamori-Katayama M."/>
            <person name="Suzuki M."/>
            <person name="Aoki J."/>
            <person name="Arakawa T."/>
            <person name="Iida J."/>
            <person name="Imamura K."/>
            <person name="Itoh M."/>
            <person name="Kato T."/>
            <person name="Kawaji H."/>
            <person name="Kawagashira N."/>
            <person name="Kawashima T."/>
            <person name="Kojima M."/>
            <person name="Kondo S."/>
            <person name="Konno H."/>
            <person name="Nakano K."/>
            <person name="Ninomiya N."/>
            <person name="Nishio T."/>
            <person name="Okada M."/>
            <person name="Plessy C."/>
            <person name="Shibata K."/>
            <person name="Shiraki T."/>
            <person name="Suzuki S."/>
            <person name="Tagami M."/>
            <person name="Waki K."/>
            <person name="Watahiki A."/>
            <person name="Okamura-Oho Y."/>
            <person name="Suzuki H."/>
            <person name="Kawai J."/>
            <person name="Hayashizaki Y."/>
        </authorList>
    </citation>
    <scope>NUCLEOTIDE SEQUENCE [LARGE SCALE MRNA]</scope>
    <source>
        <strain evidence="7">C57BL/6J</strain>
        <strain evidence="8">NOD</strain>
        <tissue evidence="7">Embryo</tissue>
    </source>
</reference>
<reference key="2">
    <citation type="journal article" date="2004" name="Genome Res.">
        <title>The status, quality, and expansion of the NIH full-length cDNA project: the Mammalian Gene Collection (MGC).</title>
        <authorList>
            <consortium name="The MGC Project Team"/>
        </authorList>
    </citation>
    <scope>NUCLEOTIDE SEQUENCE [LARGE SCALE MRNA]</scope>
    <source>
        <tissue>Lung</tissue>
    </source>
</reference>
<reference evidence="6" key="3">
    <citation type="journal article" date="2004" name="J. Neurosci.">
        <title>Neuroprotective role of a proline-rich Akt substrate in apoptotic neuronal cell death after stroke: relationships with nerve growth factor.</title>
        <authorList>
            <person name="Saito A."/>
            <person name="Narasimhan P."/>
            <person name="Hayashi T."/>
            <person name="Okuno S."/>
            <person name="Ferrand-Drake M."/>
            <person name="Chan P.H."/>
        </authorList>
    </citation>
    <scope>FUNCTION</scope>
    <scope>SUBCELLULAR LOCATION</scope>
</reference>
<reference key="4">
    <citation type="journal article" date="2004" name="Mol. Cell. Proteomics">
        <title>Phosphoproteomic analysis of the developing mouse brain.</title>
        <authorList>
            <person name="Ballif B.A."/>
            <person name="Villen J."/>
            <person name="Beausoleil S.A."/>
            <person name="Schwartz D."/>
            <person name="Gygi S.P."/>
        </authorList>
    </citation>
    <scope>IDENTIFICATION BY MASS SPECTROMETRY [LARGE SCALE ANALYSIS]</scope>
    <source>
        <tissue>Embryonic brain</tissue>
    </source>
</reference>
<reference evidence="6" key="5">
    <citation type="journal article" date="2006" name="Stroke">
        <title>Modulation of proline-rich akt substrate survival signaling pathways by oxidative stress in mouse brains after transient focal cerebral ischemia.</title>
        <authorList>
            <person name="Saito A."/>
            <person name="Hayashi T."/>
            <person name="Okuno S."/>
            <person name="Nishi T."/>
            <person name="Chan P.H."/>
        </authorList>
    </citation>
    <scope>FUNCTION</scope>
</reference>
<reference key="6">
    <citation type="journal article" date="2007" name="Proc. Natl. Acad. Sci. U.S.A.">
        <title>Large-scale phosphorylation analysis of mouse liver.</title>
        <authorList>
            <person name="Villen J."/>
            <person name="Beausoleil S.A."/>
            <person name="Gerber S.A."/>
            <person name="Gygi S.P."/>
        </authorList>
    </citation>
    <scope>PHOSPHORYLATION [LARGE SCALE ANALYSIS] AT SER-203; SER-204; SER-212 AND SER-213</scope>
    <scope>IDENTIFICATION BY MASS SPECTROMETRY [LARGE SCALE ANALYSIS]</scope>
    <source>
        <tissue>Liver</tissue>
    </source>
</reference>
<reference key="7">
    <citation type="journal article" date="2010" name="Cell">
        <title>A tissue-specific atlas of mouse protein phosphorylation and expression.</title>
        <authorList>
            <person name="Huttlin E.L."/>
            <person name="Jedrychowski M.P."/>
            <person name="Elias J.E."/>
            <person name="Goswami T."/>
            <person name="Rad R."/>
            <person name="Beausoleil S.A."/>
            <person name="Villen J."/>
            <person name="Haas W."/>
            <person name="Sowa M.E."/>
            <person name="Gygi S.P."/>
        </authorList>
    </citation>
    <scope>PHOSPHORYLATION [LARGE SCALE ANALYSIS] AT SER-88; SER-92; SER-117; SER-184; SER-203; SER-204; SER-212; SER-213 AND THR-247</scope>
    <scope>IDENTIFICATION BY MASS SPECTROMETRY [LARGE SCALE ANALYSIS]</scope>
    <source>
        <tissue>Brain</tissue>
        <tissue>Brown adipose tissue</tissue>
        <tissue>Heart</tissue>
        <tissue>Kidney</tissue>
        <tissue>Liver</tissue>
        <tissue>Lung</tissue>
        <tissue>Pancreas</tissue>
        <tissue>Spleen</tissue>
        <tissue>Testis</tissue>
    </source>
</reference>
<reference key="8">
    <citation type="journal article" date="2014" name="Mol. Cell. Proteomics">
        <title>Immunoaffinity enrichment and mass spectrometry analysis of protein methylation.</title>
        <authorList>
            <person name="Guo A."/>
            <person name="Gu H."/>
            <person name="Zhou J."/>
            <person name="Mulhern D."/>
            <person name="Wang Y."/>
            <person name="Lee K.A."/>
            <person name="Yang V."/>
            <person name="Aguiar M."/>
            <person name="Kornhauser J."/>
            <person name="Jia X."/>
            <person name="Ren J."/>
            <person name="Beausoleil S.A."/>
            <person name="Silva J.C."/>
            <person name="Vemulapalli V."/>
            <person name="Bedford M.T."/>
            <person name="Comb M.J."/>
        </authorList>
    </citation>
    <scope>METHYLATION [LARGE SCALE ANALYSIS] AT ARG-51</scope>
    <scope>IDENTIFICATION BY MASS SPECTROMETRY [LARGE SCALE ANALYSIS]</scope>
    <source>
        <tissue>Embryo</tissue>
    </source>
</reference>